<protein>
    <recommendedName>
        <fullName evidence="1">Membrane protein insertase YidC</fullName>
    </recommendedName>
    <alternativeName>
        <fullName evidence="1">Foldase YidC</fullName>
    </alternativeName>
    <alternativeName>
        <fullName evidence="1">Membrane integrase YidC</fullName>
    </alternativeName>
    <alternativeName>
        <fullName evidence="1">Membrane protein YidC</fullName>
    </alternativeName>
</protein>
<keyword id="KW-1003">Cell membrane</keyword>
<keyword id="KW-0143">Chaperone</keyword>
<keyword id="KW-0449">Lipoprotein</keyword>
<keyword id="KW-0472">Membrane</keyword>
<keyword id="KW-0564">Palmitate</keyword>
<keyword id="KW-0653">Protein transport</keyword>
<keyword id="KW-0732">Signal</keyword>
<keyword id="KW-0812">Transmembrane</keyword>
<keyword id="KW-1133">Transmembrane helix</keyword>
<keyword id="KW-0813">Transport</keyword>
<comment type="function">
    <text evidence="1">Required for the insertion and/or proper folding and/or complex formation of integral membrane proteins into the membrane. Involved in integration of membrane proteins that insert both dependently and independently of the Sec translocase complex, as well as at least some lipoproteins.</text>
</comment>
<comment type="subcellular location">
    <subcellularLocation>
        <location evidence="1">Cell membrane</location>
        <topology evidence="1">Multi-pass membrane protein</topology>
    </subcellularLocation>
</comment>
<comment type="similarity">
    <text evidence="1">Belongs to the OXA1/ALB3/YidC family. Type 2 subfamily.</text>
</comment>
<organism>
    <name type="scientific">Staphylococcus haemolyticus (strain JCSC1435)</name>
    <dbReference type="NCBI Taxonomy" id="279808"/>
    <lineage>
        <taxon>Bacteria</taxon>
        <taxon>Bacillati</taxon>
        <taxon>Bacillota</taxon>
        <taxon>Bacilli</taxon>
        <taxon>Bacillales</taxon>
        <taxon>Staphylococcaceae</taxon>
        <taxon>Staphylococcus</taxon>
    </lineage>
</organism>
<proteinExistence type="inferred from homology"/>
<dbReference type="EMBL" id="AP006716">
    <property type="protein sequence ID" value="BAE04253.1"/>
    <property type="molecule type" value="Genomic_DNA"/>
</dbReference>
<dbReference type="RefSeq" id="WP_011275255.1">
    <property type="nucleotide sequence ID" value="NC_007168.1"/>
</dbReference>
<dbReference type="SMR" id="Q4L7X2"/>
<dbReference type="GeneID" id="93780332"/>
<dbReference type="KEGG" id="sha:SH0944"/>
<dbReference type="eggNOG" id="COG0706">
    <property type="taxonomic scope" value="Bacteria"/>
</dbReference>
<dbReference type="HOGENOM" id="CLU_036138_5_2_9"/>
<dbReference type="OrthoDB" id="9780552at2"/>
<dbReference type="Proteomes" id="UP000000543">
    <property type="component" value="Chromosome"/>
</dbReference>
<dbReference type="GO" id="GO:0005886">
    <property type="term" value="C:plasma membrane"/>
    <property type="evidence" value="ECO:0007669"/>
    <property type="project" value="UniProtKB-SubCell"/>
</dbReference>
<dbReference type="GO" id="GO:0032977">
    <property type="term" value="F:membrane insertase activity"/>
    <property type="evidence" value="ECO:0007669"/>
    <property type="project" value="InterPro"/>
</dbReference>
<dbReference type="GO" id="GO:0051205">
    <property type="term" value="P:protein insertion into membrane"/>
    <property type="evidence" value="ECO:0007669"/>
    <property type="project" value="TreeGrafter"/>
</dbReference>
<dbReference type="GO" id="GO:0015031">
    <property type="term" value="P:protein transport"/>
    <property type="evidence" value="ECO:0007669"/>
    <property type="project" value="UniProtKB-KW"/>
</dbReference>
<dbReference type="CDD" id="cd20070">
    <property type="entry name" value="5TM_YidC_Alb3"/>
    <property type="match status" value="1"/>
</dbReference>
<dbReference type="HAMAP" id="MF_01811">
    <property type="entry name" value="YidC_type2"/>
    <property type="match status" value="1"/>
</dbReference>
<dbReference type="InterPro" id="IPR001708">
    <property type="entry name" value="YidC/ALB3/OXA1/COX18"/>
</dbReference>
<dbReference type="InterPro" id="IPR028055">
    <property type="entry name" value="YidC/Oxa/ALB_C"/>
</dbReference>
<dbReference type="InterPro" id="IPR023060">
    <property type="entry name" value="YidC/YidC1/YidC2_Firmicutes"/>
</dbReference>
<dbReference type="InterPro" id="IPR047196">
    <property type="entry name" value="YidC_ALB_C"/>
</dbReference>
<dbReference type="NCBIfam" id="TIGR03592">
    <property type="entry name" value="yidC_oxa1_cterm"/>
    <property type="match status" value="1"/>
</dbReference>
<dbReference type="PANTHER" id="PTHR12428:SF65">
    <property type="entry name" value="CYTOCHROME C OXIDASE ASSEMBLY PROTEIN COX18, MITOCHONDRIAL"/>
    <property type="match status" value="1"/>
</dbReference>
<dbReference type="PANTHER" id="PTHR12428">
    <property type="entry name" value="OXA1"/>
    <property type="match status" value="1"/>
</dbReference>
<dbReference type="Pfam" id="PF02096">
    <property type="entry name" value="60KD_IMP"/>
    <property type="match status" value="1"/>
</dbReference>
<dbReference type="PRINTS" id="PR00701">
    <property type="entry name" value="60KDINNERMP"/>
</dbReference>
<dbReference type="PROSITE" id="PS51257">
    <property type="entry name" value="PROKAR_LIPOPROTEIN"/>
    <property type="match status" value="1"/>
</dbReference>
<feature type="signal peptide" evidence="1">
    <location>
        <begin position="1"/>
        <end position="19"/>
    </location>
</feature>
<feature type="chain" id="PRO_0000042937" description="Membrane protein insertase YidC">
    <location>
        <begin position="20"/>
        <end position="291"/>
    </location>
</feature>
<feature type="transmembrane region" description="Helical" evidence="1">
    <location>
        <begin position="56"/>
        <end position="76"/>
    </location>
</feature>
<feature type="transmembrane region" description="Helical" evidence="1">
    <location>
        <begin position="134"/>
        <end position="154"/>
    </location>
</feature>
<feature type="transmembrane region" description="Helical" evidence="1">
    <location>
        <begin position="170"/>
        <end position="190"/>
    </location>
</feature>
<feature type="transmembrane region" description="Helical" evidence="1">
    <location>
        <begin position="211"/>
        <end position="231"/>
    </location>
</feature>
<feature type="region of interest" description="Disordered" evidence="2">
    <location>
        <begin position="266"/>
        <end position="291"/>
    </location>
</feature>
<feature type="lipid moiety-binding region" description="N-palmitoyl cysteine" evidence="1">
    <location>
        <position position="20"/>
    </location>
</feature>
<feature type="lipid moiety-binding region" description="S-diacylglycerol cysteine" evidence="1">
    <location>
        <position position="20"/>
    </location>
</feature>
<sequence length="291" mass="33529">MKKKALLPLLLGVMVFLAGCDYSKSSNRDGFFYNTFVEPMSKVLHWLGHSVFNDDYGIAIIVLVLVIRIILLPFMLSNYKNSHLMREKMKVAKPEVDGVQEKVKRARTQEEKMAANQEMMEVYKKYDINPMKSALGCLPVLIQMPVVMGLYFVLRYRIGGGIAEHPHFLWFNLIHPDIWITIIAGVLYFIQAWVSSKQMPQEQRQMTYMMMIVSPIMIIWISLSSASALGLYWSVSAAFLVVQTYFANMYYEKVAQREVAPMIEKFKENNSNSNKKGKNTQVVSKNNKKKK</sequence>
<reference key="1">
    <citation type="journal article" date="2005" name="J. Bacteriol.">
        <title>Whole-genome sequencing of Staphylococcus haemolyticus uncovers the extreme plasticity of its genome and the evolution of human-colonizing staphylococcal species.</title>
        <authorList>
            <person name="Takeuchi F."/>
            <person name="Watanabe S."/>
            <person name="Baba T."/>
            <person name="Yuzawa H."/>
            <person name="Ito T."/>
            <person name="Morimoto Y."/>
            <person name="Kuroda M."/>
            <person name="Cui L."/>
            <person name="Takahashi M."/>
            <person name="Ankai A."/>
            <person name="Baba S."/>
            <person name="Fukui S."/>
            <person name="Lee J.C."/>
            <person name="Hiramatsu K."/>
        </authorList>
    </citation>
    <scope>NUCLEOTIDE SEQUENCE [LARGE SCALE GENOMIC DNA]</scope>
    <source>
        <strain>JCSC1435</strain>
    </source>
</reference>
<accession>Q4L7X2</accession>
<evidence type="ECO:0000255" key="1">
    <source>
        <dbReference type="HAMAP-Rule" id="MF_01811"/>
    </source>
</evidence>
<evidence type="ECO:0000256" key="2">
    <source>
        <dbReference type="SAM" id="MobiDB-lite"/>
    </source>
</evidence>
<gene>
    <name evidence="1" type="primary">yidC</name>
    <name type="ordered locus">SH0944</name>
</gene>
<name>YIDC_STAHJ</name>